<dbReference type="EC" id="2.1.1.17" evidence="1"/>
<dbReference type="EMBL" id="DS027045">
    <property type="protein sequence ID" value="EAW14456.1"/>
    <property type="molecule type" value="Genomic_DNA"/>
</dbReference>
<dbReference type="RefSeq" id="XP_001275882.1">
    <property type="nucleotide sequence ID" value="XM_001275881.1"/>
</dbReference>
<dbReference type="SMR" id="A1C7T5"/>
<dbReference type="STRING" id="344612.A1C7T5"/>
<dbReference type="EnsemblFungi" id="EAW14456">
    <property type="protein sequence ID" value="EAW14456"/>
    <property type="gene ID" value="ACLA_074940"/>
</dbReference>
<dbReference type="GeneID" id="4707698"/>
<dbReference type="KEGG" id="act:ACLA_074940"/>
<dbReference type="VEuPathDB" id="FungiDB:ACLA_074940"/>
<dbReference type="eggNOG" id="ENOG502QRGH">
    <property type="taxonomic scope" value="Eukaryota"/>
</dbReference>
<dbReference type="HOGENOM" id="CLU_005987_0_0_1"/>
<dbReference type="OMA" id="RIWYSVG"/>
<dbReference type="OrthoDB" id="4583at2759"/>
<dbReference type="UniPathway" id="UPA00753"/>
<dbReference type="Proteomes" id="UP000006701">
    <property type="component" value="Unassembled WGS sequence"/>
</dbReference>
<dbReference type="GO" id="GO:0032541">
    <property type="term" value="C:cortical endoplasmic reticulum"/>
    <property type="evidence" value="ECO:0007669"/>
    <property type="project" value="EnsemblFungi"/>
</dbReference>
<dbReference type="GO" id="GO:0005789">
    <property type="term" value="C:endoplasmic reticulum membrane"/>
    <property type="evidence" value="ECO:0007669"/>
    <property type="project" value="UniProtKB-SubCell"/>
</dbReference>
<dbReference type="GO" id="GO:0097038">
    <property type="term" value="C:perinuclear endoplasmic reticulum"/>
    <property type="evidence" value="ECO:0007669"/>
    <property type="project" value="EnsemblFungi"/>
</dbReference>
<dbReference type="GO" id="GO:0004608">
    <property type="term" value="F:phosphatidylethanolamine N-methyltransferase activity"/>
    <property type="evidence" value="ECO:0007669"/>
    <property type="project" value="UniProtKB-UniRule"/>
</dbReference>
<dbReference type="GO" id="GO:0032259">
    <property type="term" value="P:methylation"/>
    <property type="evidence" value="ECO:0007669"/>
    <property type="project" value="UniProtKB-KW"/>
</dbReference>
<dbReference type="GO" id="GO:0006656">
    <property type="term" value="P:phosphatidylcholine biosynthetic process"/>
    <property type="evidence" value="ECO:0007669"/>
    <property type="project" value="UniProtKB-UniRule"/>
</dbReference>
<dbReference type="FunFam" id="2.60.40.2840:FF:000006">
    <property type="entry name" value="Phosphatidylethanolamine N-methyltransferase"/>
    <property type="match status" value="1"/>
</dbReference>
<dbReference type="Gene3D" id="2.60.40.2840">
    <property type="match status" value="1"/>
</dbReference>
<dbReference type="HAMAP" id="MF_03217">
    <property type="entry name" value="PEMT"/>
    <property type="match status" value="1"/>
</dbReference>
<dbReference type="InterPro" id="IPR007318">
    <property type="entry name" value="Phopholipid_MeTrfase"/>
</dbReference>
<dbReference type="InterPro" id="IPR016219">
    <property type="entry name" value="Phosphatid-EA_MeTrfase_fun"/>
</dbReference>
<dbReference type="PANTHER" id="PTHR32138">
    <property type="entry name" value="PHOSPHATIDYLETHANOLAMINE N-METHYLTRANSFERASE"/>
    <property type="match status" value="1"/>
</dbReference>
<dbReference type="PANTHER" id="PTHR32138:SF0">
    <property type="entry name" value="PHOSPHATIDYLETHANOLAMINE N-METHYLTRANSFERASE"/>
    <property type="match status" value="1"/>
</dbReference>
<dbReference type="Pfam" id="PF04191">
    <property type="entry name" value="PEMT"/>
    <property type="match status" value="2"/>
</dbReference>
<dbReference type="PIRSF" id="PIRSF000383">
    <property type="entry name" value="PEAMT"/>
    <property type="match status" value="1"/>
</dbReference>
<dbReference type="PROSITE" id="PS51598">
    <property type="entry name" value="SAM_CHO2"/>
    <property type="match status" value="1"/>
</dbReference>
<name>CHO2_ASPCL</name>
<sequence length="971" mass="109072">MDRGLSTGTHQEDDGLRERIVASQSGAALTPEALTATGEGLLKDKTGKEMKTYGRTPGGTVFTVPQTHDMVSQLLSPSEPKNLSDVAVIAILGVHILLLWGLPAGAKVPVFALIYLFWRAAYNAGIGWLLHNQSNYNTLVRWAEKTKIFVNPATGKNPHPNLYQLIKRELETKIPTDYSFENAPIEYNTWLVFRRLVDLILMCDFVSYCLFAVACSGRPVDEGALMTVLRWSAGIVLVLFNLWVKLDAHRVVKDYAWYWGDFFFLIDQELTFDGVFEMAPHPMYSVGYAGYYGISLMAASYKVLFISILAHAAQFAFLVFVENPHIDKTYNPPPPRKRTIDQESVSAASQASSSPIAPASLDEQLPHAPSYASGPPPSVHNLLGIQNLDLHRITDTSSMLIQFLVFAITVLTPSTPWYRFLFVANAAIWRIWYSVGIGLVLDRQSNRKAWTRHFVKYGETPQEAWNQWKGTYHLSMVMCYASFIAAVWKMYTFPADWGYGLVLLRHVLGAGLISLQIWTSVSIYESLGEFGWFYGDFFFDASPKLTYNGIYRFLNNPERVLGLAGVWGAVLITSSGAITFLALLSHTLTLAFIQFVERPHMQKLYGRSLRRDAGLTKSLKRSLPDPLKQLHGSVDKMFDDSFEFIEDLIDTARPKLAAGVNTFVKDTSALFQKYPARVTISRIDEDLAGYDSRDYSLEVEGTDSLSLHDVDQSSGREGLNARMPLDRRGDLKNLVFEYGSPIKVKWTAPLNHSKKDWIGLYRVIDNTSREISRVSSQGRWIATNEGSYDNSKCEQGIVTSDVVIPASQRKDGEGRDLASGEVVFSGDKLFWTQGVFEFRYHHNGKHNVMSISRPFEIRISRFDEDEIPLMDPTSVEMSLFPVVRNCFDRDPEIAPETVDEPFGSLVERDGKYAKRVVFAVHQMFGIEFAPEVVKADGSVHNLAWRICNAKRVLAPYSMPKNGAATPTEAKE</sequence>
<proteinExistence type="inferred from homology"/>
<protein>
    <recommendedName>
        <fullName evidence="1">Phosphatidylethanolamine N-methyltransferase</fullName>
        <shortName evidence="1">PE methyltransferase</shortName>
        <shortName evidence="1">PEAMT</shortName>
        <shortName evidence="1">PEMT</shortName>
        <ecNumber evidence="1">2.1.1.17</ecNumber>
    </recommendedName>
</protein>
<gene>
    <name type="primary">cho2</name>
    <name type="ORF">ACLA_074940</name>
</gene>
<reference key="1">
    <citation type="journal article" date="2008" name="PLoS Genet.">
        <title>Genomic islands in the pathogenic filamentous fungus Aspergillus fumigatus.</title>
        <authorList>
            <person name="Fedorova N.D."/>
            <person name="Khaldi N."/>
            <person name="Joardar V.S."/>
            <person name="Maiti R."/>
            <person name="Amedeo P."/>
            <person name="Anderson M.J."/>
            <person name="Crabtree J."/>
            <person name="Silva J.C."/>
            <person name="Badger J.H."/>
            <person name="Albarraq A."/>
            <person name="Angiuoli S."/>
            <person name="Bussey H."/>
            <person name="Bowyer P."/>
            <person name="Cotty P.J."/>
            <person name="Dyer P.S."/>
            <person name="Egan A."/>
            <person name="Galens K."/>
            <person name="Fraser-Liggett C.M."/>
            <person name="Haas B.J."/>
            <person name="Inman J.M."/>
            <person name="Kent R."/>
            <person name="Lemieux S."/>
            <person name="Malavazi I."/>
            <person name="Orvis J."/>
            <person name="Roemer T."/>
            <person name="Ronning C.M."/>
            <person name="Sundaram J.P."/>
            <person name="Sutton G."/>
            <person name="Turner G."/>
            <person name="Venter J.C."/>
            <person name="White O.R."/>
            <person name="Whitty B.R."/>
            <person name="Youngman P."/>
            <person name="Wolfe K.H."/>
            <person name="Goldman G.H."/>
            <person name="Wortman J.R."/>
            <person name="Jiang B."/>
            <person name="Denning D.W."/>
            <person name="Nierman W.C."/>
        </authorList>
    </citation>
    <scope>NUCLEOTIDE SEQUENCE [LARGE SCALE GENOMIC DNA]</scope>
    <source>
        <strain>ATCC 1007 / CBS 513.65 / DSM 816 / NCTC 3887 / NRRL 1 / QM 1276 / 107</strain>
    </source>
</reference>
<evidence type="ECO:0000255" key="1">
    <source>
        <dbReference type="HAMAP-Rule" id="MF_03217"/>
    </source>
</evidence>
<accession>A1C7T5</accession>
<organism>
    <name type="scientific">Aspergillus clavatus (strain ATCC 1007 / CBS 513.65 / DSM 816 / NCTC 3887 / NRRL 1 / QM 1276 / 107)</name>
    <dbReference type="NCBI Taxonomy" id="344612"/>
    <lineage>
        <taxon>Eukaryota</taxon>
        <taxon>Fungi</taxon>
        <taxon>Dikarya</taxon>
        <taxon>Ascomycota</taxon>
        <taxon>Pezizomycotina</taxon>
        <taxon>Eurotiomycetes</taxon>
        <taxon>Eurotiomycetidae</taxon>
        <taxon>Eurotiales</taxon>
        <taxon>Aspergillaceae</taxon>
        <taxon>Aspergillus</taxon>
        <taxon>Aspergillus subgen. Fumigati</taxon>
    </lineage>
</organism>
<keyword id="KW-0256">Endoplasmic reticulum</keyword>
<keyword id="KW-0444">Lipid biosynthesis</keyword>
<keyword id="KW-0443">Lipid metabolism</keyword>
<keyword id="KW-0472">Membrane</keyword>
<keyword id="KW-0489">Methyltransferase</keyword>
<keyword id="KW-0594">Phospholipid biosynthesis</keyword>
<keyword id="KW-1208">Phospholipid metabolism</keyword>
<keyword id="KW-1185">Reference proteome</keyword>
<keyword id="KW-0949">S-adenosyl-L-methionine</keyword>
<keyword id="KW-0808">Transferase</keyword>
<keyword id="KW-0812">Transmembrane</keyword>
<keyword id="KW-1133">Transmembrane helix</keyword>
<comment type="function">
    <text evidence="1">Catalyzes the first step of the methylation pathway of phosphatidylcholine biosynthesis, the SAM-dependent methylation of phosphatidylethanolamine (PE) to phosphatidylmonomethylethanolamine (PMME).</text>
</comment>
<comment type="catalytic activity">
    <reaction evidence="1">
        <text>a 1,2-diacyl-sn-glycero-3-phosphoethanolamine + S-adenosyl-L-methionine = a 1,2-diacyl-sn-glycero-3-phospho-N-methylethanolamine + S-adenosyl-L-homocysteine + H(+)</text>
        <dbReference type="Rhea" id="RHEA:11164"/>
        <dbReference type="ChEBI" id="CHEBI:15378"/>
        <dbReference type="ChEBI" id="CHEBI:57856"/>
        <dbReference type="ChEBI" id="CHEBI:59789"/>
        <dbReference type="ChEBI" id="CHEBI:64573"/>
        <dbReference type="ChEBI" id="CHEBI:64612"/>
        <dbReference type="EC" id="2.1.1.17"/>
    </reaction>
</comment>
<comment type="pathway">
    <text evidence="1">Phospholipid metabolism; phosphatidylcholine biosynthesis.</text>
</comment>
<comment type="subcellular location">
    <subcellularLocation>
        <location evidence="1">Endoplasmic reticulum membrane</location>
        <topology evidence="1">Multi-pass membrane protein</topology>
    </subcellularLocation>
</comment>
<comment type="similarity">
    <text evidence="1">Belongs to the class VI-like SAM-binding methyltransferase superfamily. CHO2 family.</text>
</comment>
<feature type="chain" id="PRO_0000405873" description="Phosphatidylethanolamine N-methyltransferase">
    <location>
        <begin position="1"/>
        <end position="971"/>
    </location>
</feature>
<feature type="topological domain" description="Lumenal" evidence="1">
    <location>
        <begin position="1"/>
        <end position="85"/>
    </location>
</feature>
<feature type="transmembrane region" description="Helical" evidence="1">
    <location>
        <begin position="86"/>
        <end position="106"/>
    </location>
</feature>
<feature type="topological domain" description="Cytoplasmic" evidence="1">
    <location>
        <begin position="107"/>
        <end position="109"/>
    </location>
</feature>
<feature type="transmembrane region" description="Helical" evidence="1">
    <location>
        <begin position="110"/>
        <end position="130"/>
    </location>
</feature>
<feature type="topological domain" description="Lumenal" evidence="1">
    <location>
        <begin position="131"/>
        <end position="195"/>
    </location>
</feature>
<feature type="transmembrane region" description="Helical" evidence="1">
    <location>
        <begin position="196"/>
        <end position="216"/>
    </location>
</feature>
<feature type="topological domain" description="Cytoplasmic" evidence="1">
    <location>
        <begin position="217"/>
        <end position="223"/>
    </location>
</feature>
<feature type="transmembrane region" description="Helical" evidence="1">
    <location>
        <begin position="224"/>
        <end position="244"/>
    </location>
</feature>
<feature type="topological domain" description="Lumenal" evidence="1">
    <location>
        <begin position="245"/>
        <end position="277"/>
    </location>
</feature>
<feature type="transmembrane region" description="Helical" evidence="1">
    <location>
        <begin position="278"/>
        <end position="298"/>
    </location>
</feature>
<feature type="topological domain" description="Cytoplasmic" evidence="1">
    <location>
        <begin position="299"/>
        <end position="300"/>
    </location>
</feature>
<feature type="transmembrane region" description="Helical" evidence="1">
    <location>
        <begin position="301"/>
        <end position="321"/>
    </location>
</feature>
<feature type="topological domain" description="Lumenal" evidence="1">
    <location>
        <begin position="322"/>
        <end position="397"/>
    </location>
</feature>
<feature type="transmembrane region" description="Helical" evidence="1">
    <location>
        <begin position="398"/>
        <end position="418"/>
    </location>
</feature>
<feature type="topological domain" description="Cytoplasmic" evidence="1">
    <location>
        <position position="419"/>
    </location>
</feature>
<feature type="transmembrane region" description="Helical" evidence="1">
    <location>
        <begin position="420"/>
        <end position="440"/>
    </location>
</feature>
<feature type="topological domain" description="Lumenal" evidence="1">
    <location>
        <begin position="441"/>
        <end position="482"/>
    </location>
</feature>
<feature type="transmembrane region" description="Helical" evidence="1">
    <location>
        <begin position="483"/>
        <end position="503"/>
    </location>
</feature>
<feature type="topological domain" description="Cytoplasmic" evidence="1">
    <location>
        <begin position="504"/>
        <end position="506"/>
    </location>
</feature>
<feature type="transmembrane region" description="Helical" evidence="1">
    <location>
        <begin position="507"/>
        <end position="527"/>
    </location>
</feature>
<feature type="topological domain" description="Lumenal" evidence="1">
    <location>
        <begin position="528"/>
        <end position="562"/>
    </location>
</feature>
<feature type="transmembrane region" description="Helical" evidence="1">
    <location>
        <begin position="563"/>
        <end position="583"/>
    </location>
</feature>
<feature type="topological domain" description="Cytoplasmic" evidence="1">
    <location>
        <begin position="584"/>
        <end position="971"/>
    </location>
</feature>